<evidence type="ECO:0000255" key="1">
    <source>
        <dbReference type="HAMAP-Rule" id="MF_00444"/>
    </source>
</evidence>
<organism>
    <name type="scientific">Pseudothermotoga lettingae (strain ATCC BAA-301 / DSM 14385 / NBRC 107922 / TMO)</name>
    <name type="common">Thermotoga lettingae</name>
    <dbReference type="NCBI Taxonomy" id="416591"/>
    <lineage>
        <taxon>Bacteria</taxon>
        <taxon>Thermotogati</taxon>
        <taxon>Thermotogota</taxon>
        <taxon>Thermotogae</taxon>
        <taxon>Thermotogales</taxon>
        <taxon>Thermotogaceae</taxon>
        <taxon>Pseudothermotoga</taxon>
    </lineage>
</organism>
<gene>
    <name evidence="1" type="primary">clpP</name>
    <name type="ordered locus">Tlet_1432</name>
</gene>
<dbReference type="EC" id="3.4.21.92" evidence="1"/>
<dbReference type="EMBL" id="CP000812">
    <property type="protein sequence ID" value="ABV33988.1"/>
    <property type="molecule type" value="Genomic_DNA"/>
</dbReference>
<dbReference type="SMR" id="A8F754"/>
<dbReference type="STRING" id="416591.Tlet_1432"/>
<dbReference type="MEROPS" id="S14.001"/>
<dbReference type="KEGG" id="tle:Tlet_1432"/>
<dbReference type="eggNOG" id="COG0740">
    <property type="taxonomic scope" value="Bacteria"/>
</dbReference>
<dbReference type="HOGENOM" id="CLU_058707_3_2_0"/>
<dbReference type="Proteomes" id="UP000002016">
    <property type="component" value="Chromosome"/>
</dbReference>
<dbReference type="GO" id="GO:0005737">
    <property type="term" value="C:cytoplasm"/>
    <property type="evidence" value="ECO:0007669"/>
    <property type="project" value="UniProtKB-SubCell"/>
</dbReference>
<dbReference type="GO" id="GO:0009368">
    <property type="term" value="C:endopeptidase Clp complex"/>
    <property type="evidence" value="ECO:0007669"/>
    <property type="project" value="TreeGrafter"/>
</dbReference>
<dbReference type="GO" id="GO:0004176">
    <property type="term" value="F:ATP-dependent peptidase activity"/>
    <property type="evidence" value="ECO:0007669"/>
    <property type="project" value="InterPro"/>
</dbReference>
<dbReference type="GO" id="GO:0051117">
    <property type="term" value="F:ATPase binding"/>
    <property type="evidence" value="ECO:0007669"/>
    <property type="project" value="TreeGrafter"/>
</dbReference>
<dbReference type="GO" id="GO:0004252">
    <property type="term" value="F:serine-type endopeptidase activity"/>
    <property type="evidence" value="ECO:0007669"/>
    <property type="project" value="UniProtKB-UniRule"/>
</dbReference>
<dbReference type="GO" id="GO:0006515">
    <property type="term" value="P:protein quality control for misfolded or incompletely synthesized proteins"/>
    <property type="evidence" value="ECO:0007669"/>
    <property type="project" value="TreeGrafter"/>
</dbReference>
<dbReference type="CDD" id="cd07017">
    <property type="entry name" value="S14_ClpP_2"/>
    <property type="match status" value="1"/>
</dbReference>
<dbReference type="FunFam" id="3.90.226.10:FF:000001">
    <property type="entry name" value="ATP-dependent Clp protease proteolytic subunit"/>
    <property type="match status" value="1"/>
</dbReference>
<dbReference type="Gene3D" id="3.90.226.10">
    <property type="entry name" value="2-enoyl-CoA Hydratase, Chain A, domain 1"/>
    <property type="match status" value="1"/>
</dbReference>
<dbReference type="HAMAP" id="MF_00444">
    <property type="entry name" value="ClpP"/>
    <property type="match status" value="1"/>
</dbReference>
<dbReference type="InterPro" id="IPR001907">
    <property type="entry name" value="ClpP"/>
</dbReference>
<dbReference type="InterPro" id="IPR029045">
    <property type="entry name" value="ClpP/crotonase-like_dom_sf"/>
</dbReference>
<dbReference type="InterPro" id="IPR023562">
    <property type="entry name" value="ClpP/TepA"/>
</dbReference>
<dbReference type="InterPro" id="IPR033135">
    <property type="entry name" value="ClpP_His_AS"/>
</dbReference>
<dbReference type="InterPro" id="IPR018215">
    <property type="entry name" value="ClpP_Ser_AS"/>
</dbReference>
<dbReference type="NCBIfam" id="TIGR00493">
    <property type="entry name" value="clpP"/>
    <property type="match status" value="1"/>
</dbReference>
<dbReference type="NCBIfam" id="NF001368">
    <property type="entry name" value="PRK00277.1"/>
    <property type="match status" value="1"/>
</dbReference>
<dbReference type="NCBIfam" id="NF009205">
    <property type="entry name" value="PRK12553.1"/>
    <property type="match status" value="1"/>
</dbReference>
<dbReference type="PANTHER" id="PTHR10381">
    <property type="entry name" value="ATP-DEPENDENT CLP PROTEASE PROTEOLYTIC SUBUNIT"/>
    <property type="match status" value="1"/>
</dbReference>
<dbReference type="PANTHER" id="PTHR10381:SF70">
    <property type="entry name" value="ATP-DEPENDENT CLP PROTEASE PROTEOLYTIC SUBUNIT"/>
    <property type="match status" value="1"/>
</dbReference>
<dbReference type="Pfam" id="PF00574">
    <property type="entry name" value="CLP_protease"/>
    <property type="match status" value="1"/>
</dbReference>
<dbReference type="PRINTS" id="PR00127">
    <property type="entry name" value="CLPPROTEASEP"/>
</dbReference>
<dbReference type="SUPFAM" id="SSF52096">
    <property type="entry name" value="ClpP/crotonase"/>
    <property type="match status" value="1"/>
</dbReference>
<dbReference type="PROSITE" id="PS00382">
    <property type="entry name" value="CLP_PROTEASE_HIS"/>
    <property type="match status" value="1"/>
</dbReference>
<dbReference type="PROSITE" id="PS00381">
    <property type="entry name" value="CLP_PROTEASE_SER"/>
    <property type="match status" value="1"/>
</dbReference>
<protein>
    <recommendedName>
        <fullName evidence="1">ATP-dependent Clp protease proteolytic subunit</fullName>
        <ecNumber evidence="1">3.4.21.92</ecNumber>
    </recommendedName>
    <alternativeName>
        <fullName evidence="1">Endopeptidase Clp</fullName>
    </alternativeName>
</protein>
<proteinExistence type="inferred from homology"/>
<feature type="chain" id="PRO_1000060262" description="ATP-dependent Clp protease proteolytic subunit">
    <location>
        <begin position="1"/>
        <end position="199"/>
    </location>
</feature>
<feature type="active site" description="Nucleophile" evidence="1">
    <location>
        <position position="102"/>
    </location>
</feature>
<feature type="active site" evidence="1">
    <location>
        <position position="127"/>
    </location>
</feature>
<accession>A8F754</accession>
<comment type="function">
    <text evidence="1">Cleaves peptides in various proteins in a process that requires ATP hydrolysis. Has a chymotrypsin-like activity. Plays a major role in the degradation of misfolded proteins.</text>
</comment>
<comment type="catalytic activity">
    <reaction evidence="1">
        <text>Hydrolysis of proteins to small peptides in the presence of ATP and magnesium. alpha-casein is the usual test substrate. In the absence of ATP, only oligopeptides shorter than five residues are hydrolyzed (such as succinyl-Leu-Tyr-|-NHMec, and Leu-Tyr-Leu-|-Tyr-Trp, in which cleavage of the -Tyr-|-Leu- and -Tyr-|-Trp bonds also occurs).</text>
        <dbReference type="EC" id="3.4.21.92"/>
    </reaction>
</comment>
<comment type="subunit">
    <text evidence="1">Fourteen ClpP subunits assemble into 2 heptameric rings which stack back to back to give a disk-like structure with a central cavity, resembling the structure of eukaryotic proteasomes.</text>
</comment>
<comment type="subcellular location">
    <subcellularLocation>
        <location evidence="1">Cytoplasm</location>
    </subcellularLocation>
</comment>
<comment type="similarity">
    <text evidence="1">Belongs to the peptidase S14 family.</text>
</comment>
<keyword id="KW-0963">Cytoplasm</keyword>
<keyword id="KW-0378">Hydrolase</keyword>
<keyword id="KW-0645">Protease</keyword>
<keyword id="KW-1185">Reference proteome</keyword>
<keyword id="KW-0720">Serine protease</keyword>
<name>CLPP_PSELT</name>
<reference key="1">
    <citation type="submission" date="2007-08" db="EMBL/GenBank/DDBJ databases">
        <title>Complete sequence of Thermotoga lettingae TMO.</title>
        <authorList>
            <consortium name="US DOE Joint Genome Institute"/>
            <person name="Copeland A."/>
            <person name="Lucas S."/>
            <person name="Lapidus A."/>
            <person name="Barry K."/>
            <person name="Glavina del Rio T."/>
            <person name="Dalin E."/>
            <person name="Tice H."/>
            <person name="Pitluck S."/>
            <person name="Foster B."/>
            <person name="Bruce D."/>
            <person name="Schmutz J."/>
            <person name="Larimer F."/>
            <person name="Land M."/>
            <person name="Hauser L."/>
            <person name="Kyrpides N."/>
            <person name="Mikhailova N."/>
            <person name="Nelson K."/>
            <person name="Gogarten J.P."/>
            <person name="Noll K."/>
            <person name="Richardson P."/>
        </authorList>
    </citation>
    <scope>NUCLEOTIDE SEQUENCE [LARGE SCALE GENOMIC DNA]</scope>
    <source>
        <strain>ATCC BAA-301 / DSM 14385 / NBRC 107922 / TMO</strain>
    </source>
</reference>
<sequence>MKITDQLIPTVIESTGRYERAYDIYSRLLKDRIVFLGYAIDDHVANLVVAQLLFLEAEDPDKDIQLYINSPGGSVTAGLAIYDTMQYIKSDVVTICVGQAASMAAVLLASGTKGKRFALPNARIMLHQPLGGAEGPVKDVEIITKELLRIKNLINTILSEKTGQPLDRIEKDTDRDFFMSAYEALDYGLVDKVIESKRR</sequence>